<comment type="function">
    <text evidence="2">Transcriptional regulator that controls propionyl-CoA assimilation through the methylmalonyl-CoA pathway via regulation of pccB expression.</text>
</comment>
<comment type="disruption phenotype">
    <text evidence="2">Mutant is unable to grow with propionate-HCO(3)(-) as the carbon source. However, the mutant can grow normally with succinate or acetate as the carbon source.</text>
</comment>
<comment type="similarity">
    <text evidence="5">Belongs to the short-chain fatty acyl-CoA assimilation regulator (ScfR) family.</text>
</comment>
<keyword id="KW-0238">DNA-binding</keyword>
<keyword id="KW-1185">Reference proteome</keyword>
<keyword id="KW-0804">Transcription</keyword>
<keyword id="KW-0805">Transcription regulation</keyword>
<gene>
    <name evidence="3" type="primary">pccR</name>
    <name evidence="4" type="ordered locus">RHOS4_07700</name>
    <name evidence="6" type="ORF">RSP_2186</name>
</gene>
<evidence type="ECO:0000255" key="1">
    <source>
        <dbReference type="PROSITE-ProRule" id="PRU00257"/>
    </source>
</evidence>
<evidence type="ECO:0000269" key="2">
    <source>
    </source>
</evidence>
<evidence type="ECO:0000303" key="3">
    <source>
    </source>
</evidence>
<evidence type="ECO:0000305" key="4"/>
<evidence type="ECO:0000305" key="5">
    <source>
    </source>
</evidence>
<evidence type="ECO:0000312" key="6">
    <source>
        <dbReference type="EMBL" id="ABA78338.1"/>
    </source>
</evidence>
<reference key="1">
    <citation type="submission" date="2005-09" db="EMBL/GenBank/DDBJ databases">
        <title>Complete sequence of chromosome 1 of Rhodobacter sphaeroides 2.4.1.</title>
        <authorList>
            <person name="Copeland A."/>
            <person name="Lucas S."/>
            <person name="Lapidus A."/>
            <person name="Barry K."/>
            <person name="Detter J.C."/>
            <person name="Glavina T."/>
            <person name="Hammon N."/>
            <person name="Israni S."/>
            <person name="Pitluck S."/>
            <person name="Richardson P."/>
            <person name="Mackenzie C."/>
            <person name="Choudhary M."/>
            <person name="Larimer F."/>
            <person name="Hauser L.J."/>
            <person name="Land M."/>
            <person name="Donohue T.J."/>
            <person name="Kaplan S."/>
        </authorList>
    </citation>
    <scope>NUCLEOTIDE SEQUENCE [LARGE SCALE GENOMIC DNA]</scope>
    <source>
        <strain>ATCC 17023 / DSM 158 / JCM 6121 / CCUG 31486 / LMG 2827 / NBRC 12203 / NCIMB 8253 / ATH 2.4.1.</strain>
    </source>
</reference>
<reference key="2">
    <citation type="journal article" date="2015" name="J. Bacteriol.">
        <title>Transcriptional regulation by the short-chain fatty acyl coenzyme A regulator (ScfR) PccR controls propionyl coenzyme A assimilation by Rhodobacter sphaeroides.</title>
        <authorList>
            <person name="Carter M.S."/>
            <person name="Alber B.E."/>
        </authorList>
    </citation>
    <scope>FUNCTION AS A REGULATOR</scope>
    <scope>DISRUPTION PHENOTYPE</scope>
    <source>
        <strain>ATCC 17023 / DSM 158 / JCM 6121 / CCUG 31486 / LMG 2827 / NBRC 12203 / NCIMB 8253 / ATH 2.4.1.</strain>
    </source>
</reference>
<accession>Q3J4E6</accession>
<protein>
    <recommendedName>
        <fullName evidence="3">Propionyl-CoA carboxylase regulator</fullName>
    </recommendedName>
</protein>
<feature type="chain" id="PRO_0000434653" description="Propionyl-CoA carboxylase regulator">
    <location>
        <begin position="1"/>
        <end position="461"/>
    </location>
</feature>
<feature type="domain" description="HTH cro/C1-type" evidence="1">
    <location>
        <begin position="11"/>
        <end position="65"/>
    </location>
</feature>
<feature type="DNA-binding region" description="H-T-H motif" evidence="1">
    <location>
        <begin position="22"/>
        <end position="41"/>
    </location>
</feature>
<name>PCCR_CERS4</name>
<dbReference type="EMBL" id="CP000143">
    <property type="protein sequence ID" value="ABA78338.1"/>
    <property type="molecule type" value="Genomic_DNA"/>
</dbReference>
<dbReference type="RefSeq" id="WP_002719339.1">
    <property type="nucleotide sequence ID" value="NZ_CP030271.1"/>
</dbReference>
<dbReference type="RefSeq" id="YP_352239.1">
    <property type="nucleotide sequence ID" value="NC_007493.2"/>
</dbReference>
<dbReference type="SMR" id="Q3J4E6"/>
<dbReference type="STRING" id="272943.RSP_2186"/>
<dbReference type="EnsemblBacteria" id="ABA78338">
    <property type="protein sequence ID" value="ABA78338"/>
    <property type="gene ID" value="RSP_2186"/>
</dbReference>
<dbReference type="GeneID" id="67445955"/>
<dbReference type="KEGG" id="rsp:RSP_2186"/>
<dbReference type="PATRIC" id="fig|272943.9.peg.1082"/>
<dbReference type="eggNOG" id="COG1396">
    <property type="taxonomic scope" value="Bacteria"/>
</dbReference>
<dbReference type="eggNOG" id="COG3800">
    <property type="taxonomic scope" value="Bacteria"/>
</dbReference>
<dbReference type="OrthoDB" id="1123084at2"/>
<dbReference type="PhylomeDB" id="Q3J4E6"/>
<dbReference type="Proteomes" id="UP000002703">
    <property type="component" value="Chromosome 1"/>
</dbReference>
<dbReference type="GO" id="GO:0005829">
    <property type="term" value="C:cytosol"/>
    <property type="evidence" value="ECO:0007669"/>
    <property type="project" value="TreeGrafter"/>
</dbReference>
<dbReference type="GO" id="GO:0003677">
    <property type="term" value="F:DNA binding"/>
    <property type="evidence" value="ECO:0007669"/>
    <property type="project" value="UniProtKB-KW"/>
</dbReference>
<dbReference type="GO" id="GO:0003700">
    <property type="term" value="F:DNA-binding transcription factor activity"/>
    <property type="evidence" value="ECO:0007669"/>
    <property type="project" value="TreeGrafter"/>
</dbReference>
<dbReference type="CDD" id="cd00093">
    <property type="entry name" value="HTH_XRE"/>
    <property type="match status" value="1"/>
</dbReference>
<dbReference type="Gene3D" id="1.10.260.40">
    <property type="entry name" value="lambda repressor-like DNA-binding domains"/>
    <property type="match status" value="1"/>
</dbReference>
<dbReference type="InterPro" id="IPR050807">
    <property type="entry name" value="Bact_TransReg_Diox"/>
</dbReference>
<dbReference type="InterPro" id="IPR001387">
    <property type="entry name" value="Cro/C1-type_HTH"/>
</dbReference>
<dbReference type="InterPro" id="IPR026281">
    <property type="entry name" value="HTH_RamB"/>
</dbReference>
<dbReference type="InterPro" id="IPR010359">
    <property type="entry name" value="IrrE_HExxH"/>
</dbReference>
<dbReference type="InterPro" id="IPR010982">
    <property type="entry name" value="Lambda_DNA-bd_dom_sf"/>
</dbReference>
<dbReference type="InterPro" id="IPR018653">
    <property type="entry name" value="ScfR_C"/>
</dbReference>
<dbReference type="PANTHER" id="PTHR46797">
    <property type="entry name" value="HTH-TYPE TRANSCRIPTIONAL REGULATOR"/>
    <property type="match status" value="1"/>
</dbReference>
<dbReference type="PANTHER" id="PTHR46797:SF23">
    <property type="entry name" value="HTH-TYPE TRANSCRIPTIONAL REGULATOR SUTR"/>
    <property type="match status" value="1"/>
</dbReference>
<dbReference type="Pfam" id="PF01381">
    <property type="entry name" value="HTH_3"/>
    <property type="match status" value="1"/>
</dbReference>
<dbReference type="Pfam" id="PF06114">
    <property type="entry name" value="Peptidase_M78"/>
    <property type="match status" value="1"/>
</dbReference>
<dbReference type="Pfam" id="PF09856">
    <property type="entry name" value="ScfRs"/>
    <property type="match status" value="1"/>
</dbReference>
<dbReference type="PIRSF" id="PIRSF019251">
    <property type="entry name" value="Rv0465c"/>
    <property type="match status" value="1"/>
</dbReference>
<dbReference type="SMART" id="SM00530">
    <property type="entry name" value="HTH_XRE"/>
    <property type="match status" value="1"/>
</dbReference>
<dbReference type="SUPFAM" id="SSF47413">
    <property type="entry name" value="lambda repressor-like DNA-binding domains"/>
    <property type="match status" value="1"/>
</dbReference>
<dbReference type="PROSITE" id="PS50943">
    <property type="entry name" value="HTH_CROC1"/>
    <property type="match status" value="1"/>
</dbReference>
<organism>
    <name type="scientific">Cereibacter sphaeroides (strain ATCC 17023 / DSM 158 / JCM 6121 / CCUG 31486 / LMG 2827 / NBRC 12203 / NCIMB 8253 / ATH 2.4.1.)</name>
    <name type="common">Rhodobacter sphaeroides</name>
    <dbReference type="NCBI Taxonomy" id="272943"/>
    <lineage>
        <taxon>Bacteria</taxon>
        <taxon>Pseudomonadati</taxon>
        <taxon>Pseudomonadota</taxon>
        <taxon>Alphaproteobacteria</taxon>
        <taxon>Rhodobacterales</taxon>
        <taxon>Paracoccaceae</taxon>
        <taxon>Cereibacter</taxon>
    </lineage>
</organism>
<sequence length="461" mass="51311">MAQKLYAGAKLRELRVKLGLTQKVFAERLGASLPYLNQMENNHRPVSATVVLALAQEFGVDVTKLTTSEAERIVTDMREALADPVFTDSPPLADLRLVASNAPAFARAFLDLHRAYRQTHERLASLDEALGRDEADLRPSPWEEVRDFFHYCDNYLDAVDRAAEHYAAPGGVRRDVFSAAMETLTRAGLDLQISDMPAIRSREGNALRLSARAAAPTQRFQLLHQVALLTQNDLLEATLDLARFQTAEAREIAKIGLANYFAGAALLPYRPFLQAAAETRHDLERLADLFGASIEQVAHRLSTLQRPGAKGVPFFFVRVDQAGTITKRHSATRFQFARFGGACPLWNVHRAFETPGRFLRQLAQTPDGVRYLLLARDVSKPGGSFTAPVRRYAIGLGCEVQHADALVYADGLDLKGSFEPIGISCRICDRQECHQRSVPPLEKRLRVDPDRRGLLPYEIVD</sequence>
<proteinExistence type="evidence at protein level"/>